<dbReference type="EC" id="3.4.21.88" evidence="1"/>
<dbReference type="EMBL" id="AE013598">
    <property type="protein sequence ID" value="AAW76196.1"/>
    <property type="status" value="ALT_INIT"/>
    <property type="molecule type" value="Genomic_DNA"/>
</dbReference>
<dbReference type="SMR" id="Q5GYM5"/>
<dbReference type="STRING" id="291331.XOO2942"/>
<dbReference type="MEROPS" id="S24.001"/>
<dbReference type="KEGG" id="xoo:XOO2942"/>
<dbReference type="HOGENOM" id="CLU_066192_45_3_6"/>
<dbReference type="Proteomes" id="UP000006735">
    <property type="component" value="Chromosome"/>
</dbReference>
<dbReference type="GO" id="GO:0003677">
    <property type="term" value="F:DNA binding"/>
    <property type="evidence" value="ECO:0007669"/>
    <property type="project" value="UniProtKB-UniRule"/>
</dbReference>
<dbReference type="GO" id="GO:0004252">
    <property type="term" value="F:serine-type endopeptidase activity"/>
    <property type="evidence" value="ECO:0007669"/>
    <property type="project" value="UniProtKB-UniRule"/>
</dbReference>
<dbReference type="GO" id="GO:0006281">
    <property type="term" value="P:DNA repair"/>
    <property type="evidence" value="ECO:0007669"/>
    <property type="project" value="UniProtKB-UniRule"/>
</dbReference>
<dbReference type="GO" id="GO:0006260">
    <property type="term" value="P:DNA replication"/>
    <property type="evidence" value="ECO:0007669"/>
    <property type="project" value="UniProtKB-UniRule"/>
</dbReference>
<dbReference type="GO" id="GO:0045892">
    <property type="term" value="P:negative regulation of DNA-templated transcription"/>
    <property type="evidence" value="ECO:0007669"/>
    <property type="project" value="UniProtKB-UniRule"/>
</dbReference>
<dbReference type="GO" id="GO:0006508">
    <property type="term" value="P:proteolysis"/>
    <property type="evidence" value="ECO:0007669"/>
    <property type="project" value="InterPro"/>
</dbReference>
<dbReference type="GO" id="GO:0009432">
    <property type="term" value="P:SOS response"/>
    <property type="evidence" value="ECO:0007669"/>
    <property type="project" value="UniProtKB-UniRule"/>
</dbReference>
<dbReference type="CDD" id="cd06529">
    <property type="entry name" value="S24_LexA-like"/>
    <property type="match status" value="1"/>
</dbReference>
<dbReference type="FunFam" id="1.10.10.10:FF:000009">
    <property type="entry name" value="LexA repressor"/>
    <property type="match status" value="1"/>
</dbReference>
<dbReference type="FunFam" id="2.10.109.10:FF:000001">
    <property type="entry name" value="LexA repressor"/>
    <property type="match status" value="1"/>
</dbReference>
<dbReference type="Gene3D" id="2.10.109.10">
    <property type="entry name" value="Umud Fragment, subunit A"/>
    <property type="match status" value="1"/>
</dbReference>
<dbReference type="Gene3D" id="1.10.10.10">
    <property type="entry name" value="Winged helix-like DNA-binding domain superfamily/Winged helix DNA-binding domain"/>
    <property type="match status" value="1"/>
</dbReference>
<dbReference type="HAMAP" id="MF_00015">
    <property type="entry name" value="LexA"/>
    <property type="match status" value="1"/>
</dbReference>
<dbReference type="InterPro" id="IPR006200">
    <property type="entry name" value="LexA"/>
</dbReference>
<dbReference type="InterPro" id="IPR039418">
    <property type="entry name" value="LexA-like"/>
</dbReference>
<dbReference type="InterPro" id="IPR036286">
    <property type="entry name" value="LexA/Signal_pep-like_sf"/>
</dbReference>
<dbReference type="InterPro" id="IPR006199">
    <property type="entry name" value="LexA_DNA-bd_dom"/>
</dbReference>
<dbReference type="InterPro" id="IPR050077">
    <property type="entry name" value="LexA_repressor"/>
</dbReference>
<dbReference type="InterPro" id="IPR006197">
    <property type="entry name" value="Peptidase_S24_LexA"/>
</dbReference>
<dbReference type="InterPro" id="IPR015927">
    <property type="entry name" value="Peptidase_S24_S26A/B/C"/>
</dbReference>
<dbReference type="InterPro" id="IPR036388">
    <property type="entry name" value="WH-like_DNA-bd_sf"/>
</dbReference>
<dbReference type="InterPro" id="IPR036390">
    <property type="entry name" value="WH_DNA-bd_sf"/>
</dbReference>
<dbReference type="NCBIfam" id="TIGR00498">
    <property type="entry name" value="lexA"/>
    <property type="match status" value="1"/>
</dbReference>
<dbReference type="PANTHER" id="PTHR33516">
    <property type="entry name" value="LEXA REPRESSOR"/>
    <property type="match status" value="1"/>
</dbReference>
<dbReference type="PANTHER" id="PTHR33516:SF2">
    <property type="entry name" value="LEXA REPRESSOR-RELATED"/>
    <property type="match status" value="1"/>
</dbReference>
<dbReference type="Pfam" id="PF01726">
    <property type="entry name" value="LexA_DNA_bind"/>
    <property type="match status" value="1"/>
</dbReference>
<dbReference type="Pfam" id="PF00717">
    <property type="entry name" value="Peptidase_S24"/>
    <property type="match status" value="1"/>
</dbReference>
<dbReference type="PRINTS" id="PR00726">
    <property type="entry name" value="LEXASERPTASE"/>
</dbReference>
<dbReference type="SUPFAM" id="SSF51306">
    <property type="entry name" value="LexA/Signal peptidase"/>
    <property type="match status" value="1"/>
</dbReference>
<dbReference type="SUPFAM" id="SSF46785">
    <property type="entry name" value="Winged helix' DNA-binding domain"/>
    <property type="match status" value="1"/>
</dbReference>
<comment type="function">
    <text evidence="1">Represses a number of genes involved in the response to DNA damage (SOS response), including recA and lexA. In the presence of single-stranded DNA, RecA interacts with LexA causing an autocatalytic cleavage which disrupts the DNA-binding part of LexA, leading to derepression of the SOS regulon and eventually DNA repair.</text>
</comment>
<comment type="catalytic activity">
    <reaction evidence="1">
        <text>Hydrolysis of Ala-|-Gly bond in repressor LexA.</text>
        <dbReference type="EC" id="3.4.21.88"/>
    </reaction>
</comment>
<comment type="subunit">
    <text evidence="1">Homodimer.</text>
</comment>
<comment type="similarity">
    <text evidence="1">Belongs to the peptidase S24 family.</text>
</comment>
<comment type="sequence caution" evidence="2">
    <conflict type="erroneous initiation">
        <sequence resource="EMBL-CDS" id="AAW76196"/>
    </conflict>
</comment>
<name>LEXA2_XANOR</name>
<protein>
    <recommendedName>
        <fullName evidence="1">LexA repressor 2</fullName>
        <ecNumber evidence="1">3.4.21.88</ecNumber>
    </recommendedName>
</protein>
<feature type="chain" id="PRO_0000170112" description="LexA repressor 2">
    <location>
        <begin position="1"/>
        <end position="213"/>
    </location>
</feature>
<feature type="DNA-binding region" description="H-T-H motif" evidence="1">
    <location>
        <begin position="27"/>
        <end position="47"/>
    </location>
</feature>
<feature type="active site" description="For autocatalytic cleavage activity" evidence="1">
    <location>
        <position position="133"/>
    </location>
</feature>
<feature type="active site" description="For autocatalytic cleavage activity" evidence="1">
    <location>
        <position position="170"/>
    </location>
</feature>
<feature type="site" description="Cleavage; by autolysis" evidence="1">
    <location>
        <begin position="98"/>
        <end position="99"/>
    </location>
</feature>
<reference key="1">
    <citation type="journal article" date="2005" name="Nucleic Acids Res.">
        <title>The genome sequence of Xanthomonas oryzae pathovar oryzae KACC10331, the bacterial blight pathogen of rice.</title>
        <authorList>
            <person name="Lee B.-M."/>
            <person name="Park Y.-J."/>
            <person name="Park D.-S."/>
            <person name="Kang H.-W."/>
            <person name="Kim J.-G."/>
            <person name="Song E.-S."/>
            <person name="Park I.-C."/>
            <person name="Yoon U.-H."/>
            <person name="Hahn J.-H."/>
            <person name="Koo B.-S."/>
            <person name="Lee G.-B."/>
            <person name="Kim H."/>
            <person name="Park H.-S."/>
            <person name="Yoon K.-O."/>
            <person name="Kim J.-H."/>
            <person name="Jung C.-H."/>
            <person name="Koh N.-H."/>
            <person name="Seo J.-S."/>
            <person name="Go S.-J."/>
        </authorList>
    </citation>
    <scope>NUCLEOTIDE SEQUENCE [LARGE SCALE GENOMIC DNA]</scope>
    <source>
        <strain>KACC10331 / KXO85</strain>
    </source>
</reference>
<keyword id="KW-0068">Autocatalytic cleavage</keyword>
<keyword id="KW-0227">DNA damage</keyword>
<keyword id="KW-0234">DNA repair</keyword>
<keyword id="KW-0235">DNA replication</keyword>
<keyword id="KW-0238">DNA-binding</keyword>
<keyword id="KW-0378">Hydrolase</keyword>
<keyword id="KW-1185">Reference proteome</keyword>
<keyword id="KW-0678">Repressor</keyword>
<keyword id="KW-0742">SOS response</keyword>
<keyword id="KW-0804">Transcription</keyword>
<keyword id="KW-0805">Transcription regulation</keyword>
<gene>
    <name evidence="1" type="primary">lexA2</name>
    <name type="ordered locus">XOO2942</name>
</gene>
<sequence>MDLTDTQQAILALIAERIDADGVPPSQTEIARAFGFKGVRAAQYHLEALEQAGAIRRVPGQARGIRLAGQGGQTRAAAVSEPVRDDVLRLPVLGRVAAGLPIGADIGSDDFVVLDRVFFSPSPDYLLKVQGDSMRDEGIFNGDLIGVHRTRDARSGQIVVARIDEEITVKLLKIGKDRIRLLPRNPDYAPIEVLPDQDFAIEGLYCGLLRPNR</sequence>
<proteinExistence type="inferred from homology"/>
<accession>Q5GYM5</accession>
<evidence type="ECO:0000255" key="1">
    <source>
        <dbReference type="HAMAP-Rule" id="MF_00015"/>
    </source>
</evidence>
<evidence type="ECO:0000305" key="2"/>
<organism>
    <name type="scientific">Xanthomonas oryzae pv. oryzae (strain KACC10331 / KXO85)</name>
    <dbReference type="NCBI Taxonomy" id="291331"/>
    <lineage>
        <taxon>Bacteria</taxon>
        <taxon>Pseudomonadati</taxon>
        <taxon>Pseudomonadota</taxon>
        <taxon>Gammaproteobacteria</taxon>
        <taxon>Lysobacterales</taxon>
        <taxon>Lysobacteraceae</taxon>
        <taxon>Xanthomonas</taxon>
    </lineage>
</organism>